<sequence length="369" mass="38954">MRVLGFMTGTSLDAVDMAVLETDGEGISAFGPAGERKLTDATREILLEATEAALKWERGEPEPQIFAKAAVTVAEEHFAAAEAFLAEHGLVWSEFDLLGMHGQTVLHERPQDGVPGRTVQLGDAGLLASLTGRPVAHDFRSADVAAGGEGAPLAPIYHLARARASGLEPPLAVLNVGGVANVTFWSGPGDFAAFDTGPGNGMIDLLVQARKAGRYDAGGRYASVGRVDEAVVRALLAHPYFEAPAPKSLDRYDFSLEPLEPLQLEDACATLVAFTAEAVGRGFELMGEVPREVVVTGGGRHNPEIMKALAARLPAPVKTAEDHGWRGDSIEAEAFAYLAARCARGQPISFPKTTGVARPMTGGRIVQPE</sequence>
<name>ANMK_PHEZH</name>
<accession>B4RCQ8</accession>
<organism>
    <name type="scientific">Phenylobacterium zucineum (strain HLK1)</name>
    <dbReference type="NCBI Taxonomy" id="450851"/>
    <lineage>
        <taxon>Bacteria</taxon>
        <taxon>Pseudomonadati</taxon>
        <taxon>Pseudomonadota</taxon>
        <taxon>Alphaproteobacteria</taxon>
        <taxon>Caulobacterales</taxon>
        <taxon>Caulobacteraceae</taxon>
        <taxon>Phenylobacterium</taxon>
    </lineage>
</organism>
<comment type="function">
    <text evidence="1">Catalyzes the specific phosphorylation of 1,6-anhydro-N-acetylmuramic acid (anhMurNAc) with the simultaneous cleavage of the 1,6-anhydro ring, generating MurNAc-6-P. Is required for the utilization of anhMurNAc either imported from the medium or derived from its own cell wall murein, and thus plays a role in cell wall recycling.</text>
</comment>
<comment type="catalytic activity">
    <reaction evidence="1">
        <text>1,6-anhydro-N-acetyl-beta-muramate + ATP + H2O = N-acetyl-D-muramate 6-phosphate + ADP + H(+)</text>
        <dbReference type="Rhea" id="RHEA:24952"/>
        <dbReference type="ChEBI" id="CHEBI:15377"/>
        <dbReference type="ChEBI" id="CHEBI:15378"/>
        <dbReference type="ChEBI" id="CHEBI:30616"/>
        <dbReference type="ChEBI" id="CHEBI:58690"/>
        <dbReference type="ChEBI" id="CHEBI:58722"/>
        <dbReference type="ChEBI" id="CHEBI:456216"/>
        <dbReference type="EC" id="2.7.1.170"/>
    </reaction>
</comment>
<comment type="pathway">
    <text evidence="1">Amino-sugar metabolism; 1,6-anhydro-N-acetylmuramate degradation.</text>
</comment>
<comment type="pathway">
    <text evidence="1">Cell wall biogenesis; peptidoglycan recycling.</text>
</comment>
<comment type="similarity">
    <text evidence="1">Belongs to the anhydro-N-acetylmuramic acid kinase family.</text>
</comment>
<proteinExistence type="inferred from homology"/>
<dbReference type="EC" id="2.7.1.170" evidence="1"/>
<dbReference type="EMBL" id="CP000747">
    <property type="protein sequence ID" value="ACG78245.1"/>
    <property type="molecule type" value="Genomic_DNA"/>
</dbReference>
<dbReference type="RefSeq" id="WP_012522387.1">
    <property type="nucleotide sequence ID" value="NC_011144.1"/>
</dbReference>
<dbReference type="SMR" id="B4RCQ8"/>
<dbReference type="STRING" id="450851.PHZ_c1834"/>
<dbReference type="KEGG" id="pzu:PHZ_c1834"/>
<dbReference type="eggNOG" id="COG2377">
    <property type="taxonomic scope" value="Bacteria"/>
</dbReference>
<dbReference type="HOGENOM" id="CLU_038782_3_0_5"/>
<dbReference type="OrthoDB" id="9763949at2"/>
<dbReference type="UniPathway" id="UPA00343"/>
<dbReference type="UniPathway" id="UPA00544"/>
<dbReference type="Proteomes" id="UP000001868">
    <property type="component" value="Chromosome"/>
</dbReference>
<dbReference type="GO" id="GO:0005524">
    <property type="term" value="F:ATP binding"/>
    <property type="evidence" value="ECO:0007669"/>
    <property type="project" value="UniProtKB-UniRule"/>
</dbReference>
<dbReference type="GO" id="GO:0016301">
    <property type="term" value="F:kinase activity"/>
    <property type="evidence" value="ECO:0007669"/>
    <property type="project" value="UniProtKB-KW"/>
</dbReference>
<dbReference type="GO" id="GO:0016773">
    <property type="term" value="F:phosphotransferase activity, alcohol group as acceptor"/>
    <property type="evidence" value="ECO:0007669"/>
    <property type="project" value="UniProtKB-UniRule"/>
</dbReference>
<dbReference type="GO" id="GO:0097175">
    <property type="term" value="P:1,6-anhydro-N-acetyl-beta-muramic acid catabolic process"/>
    <property type="evidence" value="ECO:0007669"/>
    <property type="project" value="UniProtKB-UniRule"/>
</dbReference>
<dbReference type="GO" id="GO:0006040">
    <property type="term" value="P:amino sugar metabolic process"/>
    <property type="evidence" value="ECO:0007669"/>
    <property type="project" value="InterPro"/>
</dbReference>
<dbReference type="GO" id="GO:0009254">
    <property type="term" value="P:peptidoglycan turnover"/>
    <property type="evidence" value="ECO:0007669"/>
    <property type="project" value="UniProtKB-UniRule"/>
</dbReference>
<dbReference type="Gene3D" id="3.30.420.40">
    <property type="match status" value="2"/>
</dbReference>
<dbReference type="HAMAP" id="MF_01270">
    <property type="entry name" value="AnhMurNAc_kinase"/>
    <property type="match status" value="1"/>
</dbReference>
<dbReference type="InterPro" id="IPR005338">
    <property type="entry name" value="Anhydro_N_Ac-Mur_kinase"/>
</dbReference>
<dbReference type="InterPro" id="IPR043129">
    <property type="entry name" value="ATPase_NBD"/>
</dbReference>
<dbReference type="NCBIfam" id="NF007141">
    <property type="entry name" value="PRK09585.1-5"/>
    <property type="match status" value="1"/>
</dbReference>
<dbReference type="PANTHER" id="PTHR30605">
    <property type="entry name" value="ANHYDRO-N-ACETYLMURAMIC ACID KINASE"/>
    <property type="match status" value="1"/>
</dbReference>
<dbReference type="PANTHER" id="PTHR30605:SF0">
    <property type="entry name" value="ANHYDRO-N-ACETYLMURAMIC ACID KINASE"/>
    <property type="match status" value="1"/>
</dbReference>
<dbReference type="Pfam" id="PF03702">
    <property type="entry name" value="AnmK"/>
    <property type="match status" value="1"/>
</dbReference>
<dbReference type="SUPFAM" id="SSF53067">
    <property type="entry name" value="Actin-like ATPase domain"/>
    <property type="match status" value="1"/>
</dbReference>
<feature type="chain" id="PRO_1000165168" description="Anhydro-N-acetylmuramic acid kinase">
    <location>
        <begin position="1"/>
        <end position="369"/>
    </location>
</feature>
<feature type="binding site" evidence="1">
    <location>
        <begin position="9"/>
        <end position="16"/>
    </location>
    <ligand>
        <name>ATP</name>
        <dbReference type="ChEBI" id="CHEBI:30616"/>
    </ligand>
</feature>
<reference key="1">
    <citation type="journal article" date="2008" name="BMC Genomics">
        <title>Complete genome of Phenylobacterium zucineum - a novel facultative intracellular bacterium isolated from human erythroleukemia cell line K562.</title>
        <authorList>
            <person name="Luo Y."/>
            <person name="Xu X."/>
            <person name="Ding Z."/>
            <person name="Liu Z."/>
            <person name="Zhang B."/>
            <person name="Yan Z."/>
            <person name="Sun J."/>
            <person name="Hu S."/>
            <person name="Hu X."/>
        </authorList>
    </citation>
    <scope>NUCLEOTIDE SEQUENCE [LARGE SCALE GENOMIC DNA]</scope>
    <source>
        <strain>HLK1</strain>
    </source>
</reference>
<gene>
    <name evidence="1" type="primary">anmK</name>
    <name type="ordered locus">PHZ_c1834</name>
</gene>
<evidence type="ECO:0000255" key="1">
    <source>
        <dbReference type="HAMAP-Rule" id="MF_01270"/>
    </source>
</evidence>
<keyword id="KW-0067">ATP-binding</keyword>
<keyword id="KW-0119">Carbohydrate metabolism</keyword>
<keyword id="KW-0418">Kinase</keyword>
<keyword id="KW-0547">Nucleotide-binding</keyword>
<keyword id="KW-1185">Reference proteome</keyword>
<keyword id="KW-0808">Transferase</keyword>
<protein>
    <recommendedName>
        <fullName evidence="1">Anhydro-N-acetylmuramic acid kinase</fullName>
        <ecNumber evidence="1">2.7.1.170</ecNumber>
    </recommendedName>
    <alternativeName>
        <fullName evidence="1">AnhMurNAc kinase</fullName>
    </alternativeName>
</protein>